<sequence length="266" mass="28957">MVLSDKKFVLVTGGSSGLGFETIKALIQTNQPYHVFLGCLFPDEGQSAVLSLQRDVPETPSTLESILVDVTDDESIDRCFHTVQSKIGHLDVLVNNAGISLQASEIGMREAWNRCYDVNVTGAQIMTHTFVPLLLRSNDPRLIFITSGLSSLTPMSNVYTPTRMTVPAGWPKPEVHPYRAYRATKTALNMVMLEWHWQLREDGVKTWGVSPGFLATNLGASFAGMDGAPPVLPASVGGRLVASVVEGDRDTDVGKIVLKDGEVQPF</sequence>
<protein>
    <recommendedName>
        <fullName evidence="6">Short-chain dehydrogenase/reductase tropE</fullName>
        <ecNumber evidence="5">1.1.1.-</ecNumber>
    </recommendedName>
    <alternativeName>
        <fullName evidence="7">Tropolone synthesis protein E</fullName>
    </alternativeName>
</protein>
<proteinExistence type="inferred from homology"/>
<evidence type="ECO:0000250" key="1">
    <source>
        <dbReference type="UniProtKB" id="L0E2Z4"/>
    </source>
</evidence>
<evidence type="ECO:0000250" key="2">
    <source>
        <dbReference type="UniProtKB" id="O93868"/>
    </source>
</evidence>
<evidence type="ECO:0000255" key="3">
    <source>
        <dbReference type="PROSITE-ProRule" id="PRU10001"/>
    </source>
</evidence>
<evidence type="ECO:0000269" key="4">
    <source>
    </source>
</evidence>
<evidence type="ECO:0000269" key="5">
    <source>
    </source>
</evidence>
<evidence type="ECO:0000303" key="6">
    <source>
    </source>
</evidence>
<evidence type="ECO:0000303" key="7">
    <source>
    </source>
</evidence>
<evidence type="ECO:0000305" key="8"/>
<organism>
    <name type="scientific">Talaromyces stipitatus (strain ATCC 10500 / CBS 375.48 / QM 6759 / NRRL 1006)</name>
    <name type="common">Penicillium stipitatum</name>
    <dbReference type="NCBI Taxonomy" id="441959"/>
    <lineage>
        <taxon>Eukaryota</taxon>
        <taxon>Fungi</taxon>
        <taxon>Dikarya</taxon>
        <taxon>Ascomycota</taxon>
        <taxon>Pezizomycotina</taxon>
        <taxon>Eurotiomycetes</taxon>
        <taxon>Eurotiomycetidae</taxon>
        <taxon>Eurotiales</taxon>
        <taxon>Trichocomaceae</taxon>
        <taxon>Talaromyces</taxon>
        <taxon>Talaromyces sect. Talaromyces</taxon>
    </lineage>
</organism>
<feature type="chain" id="PRO_0000437131" description="Short-chain dehydrogenase/reductase tropE">
    <location>
        <begin position="1"/>
        <end position="266"/>
    </location>
</feature>
<feature type="active site" description="Proton donor" evidence="2">
    <location>
        <position position="147"/>
    </location>
</feature>
<feature type="active site" description="Proton acceptor" evidence="3">
    <location>
        <position position="181"/>
    </location>
</feature>
<feature type="active site" description="Lowers pKa of active site Tyr" evidence="2">
    <location>
        <position position="185"/>
    </location>
</feature>
<feature type="binding site" evidence="1">
    <location>
        <position position="18"/>
    </location>
    <ligand>
        <name>NADP(+)</name>
        <dbReference type="ChEBI" id="CHEBI:58349"/>
    </ligand>
</feature>
<feature type="binding site" evidence="1">
    <location>
        <position position="69"/>
    </location>
    <ligand>
        <name>NADP(+)</name>
        <dbReference type="ChEBI" id="CHEBI:58349"/>
    </ligand>
</feature>
<feature type="binding site" evidence="2">
    <location>
        <position position="96"/>
    </location>
    <ligand>
        <name>NADP(+)</name>
        <dbReference type="ChEBI" id="CHEBI:58349"/>
    </ligand>
</feature>
<feature type="binding site" evidence="2">
    <location>
        <position position="181"/>
    </location>
    <ligand>
        <name>NADP(+)</name>
        <dbReference type="ChEBI" id="CHEBI:58349"/>
    </ligand>
</feature>
<feature type="binding site" evidence="2">
    <location>
        <position position="185"/>
    </location>
    <ligand>
        <name>NADP(+)</name>
        <dbReference type="ChEBI" id="CHEBI:58349"/>
    </ligand>
</feature>
<feature type="binding site" evidence="1">
    <location>
        <position position="216"/>
    </location>
    <ligand>
        <name>NADP(+)</name>
        <dbReference type="ChEBI" id="CHEBI:58349"/>
    </ligand>
</feature>
<name>TROPE_TALSN</name>
<reference key="1">
    <citation type="journal article" date="2012" name="Proc. Natl. Acad. Sci. U.S.A.">
        <title>Genetic, molecular, and biochemical basis of fungal tropolone biosynthesis.</title>
        <authorList>
            <person name="Davison J."/>
            <person name="al Fahad A."/>
            <person name="Cai M."/>
            <person name="Song Z."/>
            <person name="Yehia S.Y."/>
            <person name="Lazarus C.M."/>
            <person name="Bailey A.M."/>
            <person name="Simpson T.J."/>
            <person name="Cox R.J."/>
        </authorList>
    </citation>
    <scope>NUCLEOTIDE SEQUENCE [GENOMIC DNA]</scope>
    <scope>FUNCTION</scope>
    <source>
        <strain>ATCC 10500 / CBS 375.48 / QM 6759 / NRRL 1006</strain>
    </source>
</reference>
<reference key="2">
    <citation type="journal article" date="2014" name="Angew. Chem. Int. Ed.">
        <title>The biosynthesis and catabolism of the maleic anhydride moiety of stipitatonic acid.</title>
        <authorList>
            <person name="al Fahad A."/>
            <person name="Abood A."/>
            <person name="Simpson T.J."/>
            <person name="Cox R.J."/>
        </authorList>
    </citation>
    <scope>NUCLEOTIDE SEQUENCE [GENOMIC DNA]</scope>
    <scope>FUNCTION</scope>
    <scope>DISRUPTION PHENOTYPE</scope>
    <source>
        <strain>ATCC 10500 / CBS 375.48 / QM 6759 / NRRL 1006</strain>
    </source>
</reference>
<reference key="3">
    <citation type="journal article" date="2015" name="Genome Announc.">
        <title>Genome sequence of the AIDS-associated pathogen Penicillium marneffei (ATCC18224) and its near taxonomic relative Talaromyces stipitatus (ATCC10500).</title>
        <authorList>
            <person name="Nierman W.C."/>
            <person name="Fedorova-Abrams N.D."/>
            <person name="Andrianopoulos A."/>
        </authorList>
    </citation>
    <scope>NUCLEOTIDE SEQUENCE [LARGE SCALE GENOMIC DNA]</scope>
    <source>
        <strain>ATCC 10500 / CBS 375.48 / QM 6759 / NRRL 1006</strain>
    </source>
</reference>
<gene>
    <name evidence="7" type="primary">tropE</name>
    <name evidence="6" type="synonym">tsR7</name>
    <name type="ORF">TSTA_117820</name>
</gene>
<comment type="function">
    <text evidence="4 5">Short-chain dehydrogenase/reductase; part of the gene cluster that mediates the biosynthesis of the tropolone class of fungal maleic anhydrides (PubMed:22508998, PubMed:24863423). The pathway begins with the synthesis of 3-methylorcinaldehyde by the non-reducing polyketide synthase (PKS) tropA (PubMed:22508998). 3-methylorcinaldehyde is the substrate for the FAD-dependent monooxygenase tropB to yield a dearomatized hydroxycyclohexadione (PubMed:22508998, PubMed:24863423). The 2-oxoglutarate-dependent dioxygenase tropC then performs the oxidative ring expansion to provide the first tropolone metabolite stipitaldehyde (PubMed:22508998, PubMed:24863423). Trop D converts stipitaldehyde into stipitacetal which is in turn converted to stipitalide by the short-chain dehydrogenase/reductase tropE (PubMed:24863423). The next steps involve tropF, tropG, tropH, tropI and tropJ to form successive tropolone maleic anhydrides including stipitaldehydic, stipitatonic and stipitatic acids (PubMed:24863423).</text>
</comment>
<comment type="pathway">
    <text evidence="5">Secondary metabolite biosynthesis.</text>
</comment>
<comment type="disruption phenotype">
    <text evidence="5">Blocks the synthesis of tropolone class of fungal maleic anhydrides downstream of stipitacetal (PubMed:24863423).</text>
</comment>
<comment type="similarity">
    <text evidence="8">Belongs to the short-chain dehydrogenases/reductases (SDR) family.</text>
</comment>
<dbReference type="EC" id="1.1.1.-" evidence="5"/>
<dbReference type="EMBL" id="BK008910">
    <property type="protein sequence ID" value="DAA64708.1"/>
    <property type="molecule type" value="Genomic_DNA"/>
</dbReference>
<dbReference type="EMBL" id="EQ962655">
    <property type="protein sequence ID" value="EED18010.1"/>
    <property type="molecule type" value="Genomic_DNA"/>
</dbReference>
<dbReference type="RefSeq" id="XP_002482002.1">
    <property type="nucleotide sequence ID" value="XM_002481957.1"/>
</dbReference>
<dbReference type="SMR" id="B8M9K8"/>
<dbReference type="STRING" id="441959.B8M9K8"/>
<dbReference type="GeneID" id="8105840"/>
<dbReference type="VEuPathDB" id="FungiDB:TSTA_117820"/>
<dbReference type="eggNOG" id="KOG1208">
    <property type="taxonomic scope" value="Eukaryota"/>
</dbReference>
<dbReference type="HOGENOM" id="CLU_010194_9_0_1"/>
<dbReference type="InParanoid" id="B8M9K8"/>
<dbReference type="OMA" id="VWSISPG"/>
<dbReference type="OrthoDB" id="1933717at2759"/>
<dbReference type="PhylomeDB" id="B8M9K8"/>
<dbReference type="Proteomes" id="UP000001745">
    <property type="component" value="Unassembled WGS sequence"/>
</dbReference>
<dbReference type="GO" id="GO:0005737">
    <property type="term" value="C:cytoplasm"/>
    <property type="evidence" value="ECO:0007669"/>
    <property type="project" value="TreeGrafter"/>
</dbReference>
<dbReference type="GO" id="GO:0016491">
    <property type="term" value="F:oxidoreductase activity"/>
    <property type="evidence" value="ECO:0007669"/>
    <property type="project" value="UniProtKB-KW"/>
</dbReference>
<dbReference type="GO" id="GO:0019748">
    <property type="term" value="P:secondary metabolic process"/>
    <property type="evidence" value="ECO:0007669"/>
    <property type="project" value="TreeGrafter"/>
</dbReference>
<dbReference type="Gene3D" id="3.40.50.720">
    <property type="entry name" value="NAD(P)-binding Rossmann-like Domain"/>
    <property type="match status" value="1"/>
</dbReference>
<dbReference type="InterPro" id="IPR051468">
    <property type="entry name" value="Fungal_SecMetab_SDRs"/>
</dbReference>
<dbReference type="InterPro" id="IPR036291">
    <property type="entry name" value="NAD(P)-bd_dom_sf"/>
</dbReference>
<dbReference type="InterPro" id="IPR002347">
    <property type="entry name" value="SDR_fam"/>
</dbReference>
<dbReference type="PANTHER" id="PTHR43544:SF32">
    <property type="entry name" value="CHAIN DEHYDROGENASE, PUTATIVE (AFU_ORTHOLOGUE AFUA_5G01530)-RELATED"/>
    <property type="match status" value="1"/>
</dbReference>
<dbReference type="PANTHER" id="PTHR43544">
    <property type="entry name" value="SHORT-CHAIN DEHYDROGENASE/REDUCTASE"/>
    <property type="match status" value="1"/>
</dbReference>
<dbReference type="Pfam" id="PF00106">
    <property type="entry name" value="adh_short"/>
    <property type="match status" value="1"/>
</dbReference>
<dbReference type="PRINTS" id="PR00081">
    <property type="entry name" value="GDHRDH"/>
</dbReference>
<dbReference type="SUPFAM" id="SSF51735">
    <property type="entry name" value="NAD(P)-binding Rossmann-fold domains"/>
    <property type="match status" value="1"/>
</dbReference>
<accession>B8M9K8</accession>
<keyword id="KW-0521">NADP</keyword>
<keyword id="KW-0560">Oxidoreductase</keyword>
<keyword id="KW-1185">Reference proteome</keyword>